<comment type="subunit">
    <text>Myosin is a hexamer of 2 heavy chains and 4 light chains.</text>
</comment>
<comment type="miscellaneous">
    <text>This chain binds calcium.</text>
</comment>
<accession>P24732</accession>
<sequence>MAPKKAKRRAAAEGGSSNVFSMFDQTQIQEFKEAFTVIDQNRDGIIDKEDLRDTFAAMGRLNVKNEELDAMMKEASGPINFTVFLTMFGEKLKGADPEDVITGAFKVLDPEGKGTIKKQFLEELLITQCDRFSQEEIKNMWAAFSPDVGGNVDYKNICYVITHGDAKDQE</sequence>
<feature type="initiator methionine" description="Removed" evidence="1">
    <location>
        <position position="1"/>
    </location>
</feature>
<feature type="chain" id="PRO_0000198742" description="Myosin regulatory light chain 2, skeletal muscle isoform type 1">
    <location>
        <begin position="2"/>
        <end position="170"/>
    </location>
</feature>
<feature type="domain" description="EF-hand 1" evidence="4">
    <location>
        <begin position="26"/>
        <end position="61"/>
    </location>
</feature>
<feature type="domain" description="EF-hand 2" evidence="4">
    <location>
        <begin position="96"/>
        <end position="131"/>
    </location>
</feature>
<feature type="domain" description="EF-hand 3" evidence="4">
    <location>
        <begin position="132"/>
        <end position="167"/>
    </location>
</feature>
<feature type="binding site" evidence="4">
    <location>
        <position position="39"/>
    </location>
    <ligand>
        <name>Ca(2+)</name>
        <dbReference type="ChEBI" id="CHEBI:29108"/>
    </ligand>
</feature>
<feature type="binding site" evidence="4">
    <location>
        <position position="41"/>
    </location>
    <ligand>
        <name>Ca(2+)</name>
        <dbReference type="ChEBI" id="CHEBI:29108"/>
    </ligand>
</feature>
<feature type="binding site" evidence="4">
    <location>
        <position position="43"/>
    </location>
    <ligand>
        <name>Ca(2+)</name>
        <dbReference type="ChEBI" id="CHEBI:29108"/>
    </ligand>
</feature>
<feature type="binding site" evidence="4">
    <location>
        <position position="50"/>
    </location>
    <ligand>
        <name>Ca(2+)</name>
        <dbReference type="ChEBI" id="CHEBI:29108"/>
    </ligand>
</feature>
<feature type="modified residue" description="N,N,N-trimethylalanine" evidence="1">
    <location>
        <position position="2"/>
    </location>
</feature>
<feature type="modified residue" description="Phosphoserine" evidence="3">
    <location>
        <position position="16"/>
    </location>
</feature>
<feature type="modified residue" description="Phosphoserine" evidence="3">
    <location>
        <position position="17"/>
    </location>
</feature>
<feature type="modified residue" description="Phosphothreonine" evidence="2">
    <location>
        <position position="26"/>
    </location>
</feature>
<feature type="modified residue" description="Phosphothreonine" evidence="2">
    <location>
        <position position="36"/>
    </location>
</feature>
<feature type="modified residue" description="Phosphoserine" evidence="2">
    <location>
        <position position="76"/>
    </location>
</feature>
<feature type="modified residue" description="Phosphothreonine" evidence="2">
    <location>
        <position position="102"/>
    </location>
</feature>
<name>MLRT_RABIT</name>
<reference key="1">
    <citation type="journal article" date="1990" name="Nucleic Acids Res.">
        <title>Sequence of two isoforms of myosin light chain 2 isolated from a rabbit fast skeletal muscle lambda library.</title>
        <authorList>
            <person name="Maeda K."/>
            <person name="Mueller-Gerhardt E."/>
            <person name="Wittinghofer A."/>
        </authorList>
    </citation>
    <scope>NUCLEOTIDE SEQUENCE [MRNA]</scope>
</reference>
<keyword id="KW-0002">3D-structure</keyword>
<keyword id="KW-0106">Calcium</keyword>
<keyword id="KW-0479">Metal-binding</keyword>
<keyword id="KW-0488">Methylation</keyword>
<keyword id="KW-0505">Motor protein</keyword>
<keyword id="KW-0514">Muscle protein</keyword>
<keyword id="KW-0518">Myosin</keyword>
<keyword id="KW-0597">Phosphoprotein</keyword>
<keyword id="KW-1185">Reference proteome</keyword>
<keyword id="KW-0677">Repeat</keyword>
<protein>
    <recommendedName>
        <fullName>Myosin regulatory light chain 2, skeletal muscle isoform type 1</fullName>
    </recommendedName>
    <alternativeName>
        <fullName>DTNB</fullName>
    </alternativeName>
    <alternativeName>
        <fullName>Fast skeletal myosin light chain 2</fullName>
        <shortName>G2</shortName>
        <shortName>MLC-2</shortName>
    </alternativeName>
</protein>
<organism>
    <name type="scientific">Oryctolagus cuniculus</name>
    <name type="common">Rabbit</name>
    <dbReference type="NCBI Taxonomy" id="9986"/>
    <lineage>
        <taxon>Eukaryota</taxon>
        <taxon>Metazoa</taxon>
        <taxon>Chordata</taxon>
        <taxon>Craniata</taxon>
        <taxon>Vertebrata</taxon>
        <taxon>Euteleostomi</taxon>
        <taxon>Mammalia</taxon>
        <taxon>Eutheria</taxon>
        <taxon>Euarchontoglires</taxon>
        <taxon>Glires</taxon>
        <taxon>Lagomorpha</taxon>
        <taxon>Leporidae</taxon>
        <taxon>Oryctolagus</taxon>
    </lineage>
</organism>
<dbReference type="EMBL" id="X54042">
    <property type="protein sequence ID" value="CAA37975.1"/>
    <property type="molecule type" value="mRNA"/>
</dbReference>
<dbReference type="PIR" id="S12855">
    <property type="entry name" value="S12855"/>
</dbReference>
<dbReference type="PDB" id="5H53">
    <property type="method" value="EM"/>
    <property type="resolution" value="5.20 A"/>
    <property type="chains" value="B=25-170"/>
</dbReference>
<dbReference type="PDBsum" id="5H53"/>
<dbReference type="EMDB" id="EMD-6664"/>
<dbReference type="SMR" id="P24732"/>
<dbReference type="FunCoup" id="P24732">
    <property type="interactions" value="48"/>
</dbReference>
<dbReference type="InParanoid" id="P24732"/>
<dbReference type="Proteomes" id="UP000001811">
    <property type="component" value="Unplaced"/>
</dbReference>
<dbReference type="GO" id="GO:0016459">
    <property type="term" value="C:myosin complex"/>
    <property type="evidence" value="ECO:0007669"/>
    <property type="project" value="UniProtKB-KW"/>
</dbReference>
<dbReference type="GO" id="GO:0005509">
    <property type="term" value="F:calcium ion binding"/>
    <property type="evidence" value="ECO:0007669"/>
    <property type="project" value="InterPro"/>
</dbReference>
<dbReference type="FunFam" id="1.10.238.10:FF:000010">
    <property type="entry name" value="Myosin regulatory light chain 2, atrial isoform"/>
    <property type="match status" value="1"/>
</dbReference>
<dbReference type="FunFam" id="1.10.238.10:FF:000007">
    <property type="entry name" value="Putative myosin regulatory light chain sqh"/>
    <property type="match status" value="1"/>
</dbReference>
<dbReference type="Gene3D" id="1.10.238.10">
    <property type="entry name" value="EF-hand"/>
    <property type="match status" value="2"/>
</dbReference>
<dbReference type="InterPro" id="IPR011992">
    <property type="entry name" value="EF-hand-dom_pair"/>
</dbReference>
<dbReference type="InterPro" id="IPR018247">
    <property type="entry name" value="EF_Hand_1_Ca_BS"/>
</dbReference>
<dbReference type="InterPro" id="IPR002048">
    <property type="entry name" value="EF_hand_dom"/>
</dbReference>
<dbReference type="InterPro" id="IPR050403">
    <property type="entry name" value="Myosin_RLC"/>
</dbReference>
<dbReference type="PANTHER" id="PTHR23049">
    <property type="entry name" value="MYOSIN REGULATORY LIGHT CHAIN 2"/>
    <property type="match status" value="1"/>
</dbReference>
<dbReference type="Pfam" id="PF13405">
    <property type="entry name" value="EF-hand_6"/>
    <property type="match status" value="1"/>
</dbReference>
<dbReference type="SMART" id="SM00054">
    <property type="entry name" value="EFh"/>
    <property type="match status" value="2"/>
</dbReference>
<dbReference type="SUPFAM" id="SSF47473">
    <property type="entry name" value="EF-hand"/>
    <property type="match status" value="1"/>
</dbReference>
<dbReference type="PROSITE" id="PS00018">
    <property type="entry name" value="EF_HAND_1"/>
    <property type="match status" value="1"/>
</dbReference>
<dbReference type="PROSITE" id="PS50222">
    <property type="entry name" value="EF_HAND_2"/>
    <property type="match status" value="3"/>
</dbReference>
<proteinExistence type="evidence at protein level"/>
<evidence type="ECO:0000250" key="1">
    <source>
        <dbReference type="UniProtKB" id="P02608"/>
    </source>
</evidence>
<evidence type="ECO:0000250" key="2">
    <source>
        <dbReference type="UniProtKB" id="P04466"/>
    </source>
</evidence>
<evidence type="ECO:0000250" key="3">
    <source>
        <dbReference type="UniProtKB" id="P97457"/>
    </source>
</evidence>
<evidence type="ECO:0000255" key="4">
    <source>
        <dbReference type="PROSITE-ProRule" id="PRU00448"/>
    </source>
</evidence>